<accession>B1I9M8</accession>
<proteinExistence type="inferred from homology"/>
<reference key="1">
    <citation type="journal article" date="2010" name="Genome Biol.">
        <title>Structure and dynamics of the pan-genome of Streptococcus pneumoniae and closely related species.</title>
        <authorList>
            <person name="Donati C."/>
            <person name="Hiller N.L."/>
            <person name="Tettelin H."/>
            <person name="Muzzi A."/>
            <person name="Croucher N.J."/>
            <person name="Angiuoli S.V."/>
            <person name="Oggioni M."/>
            <person name="Dunning Hotopp J.C."/>
            <person name="Hu F.Z."/>
            <person name="Riley D.R."/>
            <person name="Covacci A."/>
            <person name="Mitchell T.J."/>
            <person name="Bentley S.D."/>
            <person name="Kilian M."/>
            <person name="Ehrlich G.D."/>
            <person name="Rappuoli R."/>
            <person name="Moxon E.R."/>
            <person name="Masignani V."/>
        </authorList>
    </citation>
    <scope>NUCLEOTIDE SEQUENCE [LARGE SCALE GENOMIC DNA]</scope>
    <source>
        <strain>Hungary19A-6</strain>
    </source>
</reference>
<evidence type="ECO:0000255" key="1">
    <source>
        <dbReference type="HAMAP-Rule" id="MF_00120"/>
    </source>
</evidence>
<feature type="chain" id="PRO_1000095169" description="Glutamyl-tRNA(Gln) amidotransferase subunit A">
    <location>
        <begin position="1"/>
        <end position="488"/>
    </location>
</feature>
<feature type="active site" description="Charge relay system" evidence="1">
    <location>
        <position position="77"/>
    </location>
</feature>
<feature type="active site" description="Charge relay system" evidence="1">
    <location>
        <position position="152"/>
    </location>
</feature>
<feature type="active site" description="Acyl-ester intermediate" evidence="1">
    <location>
        <position position="176"/>
    </location>
</feature>
<sequence length="488" mass="52060">MTFNNKTIEELHNLLVSKEISATELTQATLENIKSREEALNSFVTIAEEQALVQAKAIDEAGIDADNVLSGIPLAVKDNISTDGILTTAASKMLYNYEPIFDATAVANAKTKGMIVVGKTNMDEFAMGGSGETSHYGATKNAWDHSKVPGGSSSGSAAAVASGQVRLSLGSDTGGSIRQPAAFNGIVGLKPTYGTVSRFGLIAFGSSLDQIGPFAPTVKENALLLNAIASEDAKDSTSAPVRIADFTSKIGQDIKGMKIALPKEYLGEGIDPEVKETILNAAKHFEKLGAIVEEVSLPHSKYGVAVYYIIASSEASSNLQRFDGIRYGYRAEDATNLDEIYVNSRSQGFGEEVKRRIMLGTFSLSSGYYDAYYKKAGQVRTLIIQDFEKVFADYDLILGPTAPSVAYDLNSLNHDPVAMYLADLLTIPVNLAGLPGISIPAGFSQGLPVGLQLIGPKYSEETIYQAAAAFEATTDYHKQQPVIFGGDN</sequence>
<organism>
    <name type="scientific">Streptococcus pneumoniae (strain Hungary19A-6)</name>
    <dbReference type="NCBI Taxonomy" id="487214"/>
    <lineage>
        <taxon>Bacteria</taxon>
        <taxon>Bacillati</taxon>
        <taxon>Bacillota</taxon>
        <taxon>Bacilli</taxon>
        <taxon>Lactobacillales</taxon>
        <taxon>Streptococcaceae</taxon>
        <taxon>Streptococcus</taxon>
    </lineage>
</organism>
<gene>
    <name evidence="1" type="primary">gatA</name>
    <name type="ordered locus">SPH_0543</name>
</gene>
<keyword id="KW-0067">ATP-binding</keyword>
<keyword id="KW-0436">Ligase</keyword>
<keyword id="KW-0547">Nucleotide-binding</keyword>
<keyword id="KW-0648">Protein biosynthesis</keyword>
<protein>
    <recommendedName>
        <fullName evidence="1">Glutamyl-tRNA(Gln) amidotransferase subunit A</fullName>
        <shortName evidence="1">Glu-ADT subunit A</shortName>
        <ecNumber evidence="1">6.3.5.7</ecNumber>
    </recommendedName>
</protein>
<dbReference type="EC" id="6.3.5.7" evidence="1"/>
<dbReference type="EMBL" id="CP000936">
    <property type="protein sequence ID" value="ACA36173.1"/>
    <property type="molecule type" value="Genomic_DNA"/>
</dbReference>
<dbReference type="RefSeq" id="WP_000143736.1">
    <property type="nucleotide sequence ID" value="NC_010380.1"/>
</dbReference>
<dbReference type="SMR" id="B1I9M8"/>
<dbReference type="KEGG" id="spv:SPH_0543"/>
<dbReference type="HOGENOM" id="CLU_009600_0_3_9"/>
<dbReference type="Proteomes" id="UP000002163">
    <property type="component" value="Chromosome"/>
</dbReference>
<dbReference type="GO" id="GO:0030956">
    <property type="term" value="C:glutamyl-tRNA(Gln) amidotransferase complex"/>
    <property type="evidence" value="ECO:0007669"/>
    <property type="project" value="InterPro"/>
</dbReference>
<dbReference type="GO" id="GO:0005524">
    <property type="term" value="F:ATP binding"/>
    <property type="evidence" value="ECO:0007669"/>
    <property type="project" value="UniProtKB-KW"/>
</dbReference>
<dbReference type="GO" id="GO:0050567">
    <property type="term" value="F:glutaminyl-tRNA synthase (glutamine-hydrolyzing) activity"/>
    <property type="evidence" value="ECO:0007669"/>
    <property type="project" value="UniProtKB-UniRule"/>
</dbReference>
<dbReference type="GO" id="GO:0006412">
    <property type="term" value="P:translation"/>
    <property type="evidence" value="ECO:0007669"/>
    <property type="project" value="UniProtKB-UniRule"/>
</dbReference>
<dbReference type="Gene3D" id="3.90.1300.10">
    <property type="entry name" value="Amidase signature (AS) domain"/>
    <property type="match status" value="1"/>
</dbReference>
<dbReference type="HAMAP" id="MF_00120">
    <property type="entry name" value="GatA"/>
    <property type="match status" value="1"/>
</dbReference>
<dbReference type="InterPro" id="IPR000120">
    <property type="entry name" value="Amidase"/>
</dbReference>
<dbReference type="InterPro" id="IPR020556">
    <property type="entry name" value="Amidase_CS"/>
</dbReference>
<dbReference type="InterPro" id="IPR023631">
    <property type="entry name" value="Amidase_dom"/>
</dbReference>
<dbReference type="InterPro" id="IPR036928">
    <property type="entry name" value="AS_sf"/>
</dbReference>
<dbReference type="InterPro" id="IPR004412">
    <property type="entry name" value="GatA"/>
</dbReference>
<dbReference type="NCBIfam" id="TIGR00132">
    <property type="entry name" value="gatA"/>
    <property type="match status" value="1"/>
</dbReference>
<dbReference type="PANTHER" id="PTHR11895:SF151">
    <property type="entry name" value="GLUTAMYL-TRNA(GLN) AMIDOTRANSFERASE SUBUNIT A"/>
    <property type="match status" value="1"/>
</dbReference>
<dbReference type="PANTHER" id="PTHR11895">
    <property type="entry name" value="TRANSAMIDASE"/>
    <property type="match status" value="1"/>
</dbReference>
<dbReference type="Pfam" id="PF01425">
    <property type="entry name" value="Amidase"/>
    <property type="match status" value="1"/>
</dbReference>
<dbReference type="SUPFAM" id="SSF75304">
    <property type="entry name" value="Amidase signature (AS) enzymes"/>
    <property type="match status" value="1"/>
</dbReference>
<dbReference type="PROSITE" id="PS00571">
    <property type="entry name" value="AMIDASES"/>
    <property type="match status" value="1"/>
</dbReference>
<comment type="function">
    <text evidence="1">Allows the formation of correctly charged Gln-tRNA(Gln) through the transamidation of misacylated Glu-tRNA(Gln) in organisms which lack glutaminyl-tRNA synthetase. The reaction takes place in the presence of glutamine and ATP through an activated gamma-phospho-Glu-tRNA(Gln).</text>
</comment>
<comment type="catalytic activity">
    <reaction evidence="1">
        <text>L-glutamyl-tRNA(Gln) + L-glutamine + ATP + H2O = L-glutaminyl-tRNA(Gln) + L-glutamate + ADP + phosphate + H(+)</text>
        <dbReference type="Rhea" id="RHEA:17521"/>
        <dbReference type="Rhea" id="RHEA-COMP:9681"/>
        <dbReference type="Rhea" id="RHEA-COMP:9684"/>
        <dbReference type="ChEBI" id="CHEBI:15377"/>
        <dbReference type="ChEBI" id="CHEBI:15378"/>
        <dbReference type="ChEBI" id="CHEBI:29985"/>
        <dbReference type="ChEBI" id="CHEBI:30616"/>
        <dbReference type="ChEBI" id="CHEBI:43474"/>
        <dbReference type="ChEBI" id="CHEBI:58359"/>
        <dbReference type="ChEBI" id="CHEBI:78520"/>
        <dbReference type="ChEBI" id="CHEBI:78521"/>
        <dbReference type="ChEBI" id="CHEBI:456216"/>
        <dbReference type="EC" id="6.3.5.7"/>
    </reaction>
</comment>
<comment type="subunit">
    <text evidence="1">Heterotrimer of A, B and C subunits.</text>
</comment>
<comment type="similarity">
    <text evidence="1">Belongs to the amidase family. GatA subfamily.</text>
</comment>
<name>GATA_STRPI</name>